<proteinExistence type="inferred from homology"/>
<evidence type="ECO:0000255" key="1">
    <source>
        <dbReference type="HAMAP-Rule" id="MF_00004"/>
    </source>
</evidence>
<feature type="chain" id="PRO_0000321361" description="Adenine phosphoribosyltransferase">
    <location>
        <begin position="1"/>
        <end position="178"/>
    </location>
</feature>
<sequence>MTVEELKALIRTVPDFPAPGIQFRDITTLLAHGEGLAATMRHLGEAARLAGAEAIAGMEARGFIFGAGVAVELGLGFLPIRKPGKLPASTIGVDYDLEYGTDRLEIDPGAVEAGQKVVIVDDLIATGGTALAAAKLLRQAGAEVGQALFVIDLPELGGAQRLRDTGITVDSLMAFDGH</sequence>
<reference key="1">
    <citation type="journal article" date="2009" name="J. Bacteriol.">
        <title>Complete genome sequence of Erythrobacter litoralis HTCC2594.</title>
        <authorList>
            <person name="Oh H.M."/>
            <person name="Giovannoni S.J."/>
            <person name="Ferriera S."/>
            <person name="Johnson J."/>
            <person name="Cho J.C."/>
        </authorList>
    </citation>
    <scope>NUCLEOTIDE SEQUENCE [LARGE SCALE GENOMIC DNA]</scope>
    <source>
        <strain>HTCC2594</strain>
    </source>
</reference>
<organism>
    <name type="scientific">Erythrobacter litoralis (strain HTCC2594)</name>
    <dbReference type="NCBI Taxonomy" id="314225"/>
    <lineage>
        <taxon>Bacteria</taxon>
        <taxon>Pseudomonadati</taxon>
        <taxon>Pseudomonadota</taxon>
        <taxon>Alphaproteobacteria</taxon>
        <taxon>Sphingomonadales</taxon>
        <taxon>Erythrobacteraceae</taxon>
        <taxon>Erythrobacter/Porphyrobacter group</taxon>
        <taxon>Erythrobacter</taxon>
    </lineage>
</organism>
<comment type="function">
    <text evidence="1">Catalyzes a salvage reaction resulting in the formation of AMP, that is energically less costly than de novo synthesis.</text>
</comment>
<comment type="catalytic activity">
    <reaction evidence="1">
        <text>AMP + diphosphate = 5-phospho-alpha-D-ribose 1-diphosphate + adenine</text>
        <dbReference type="Rhea" id="RHEA:16609"/>
        <dbReference type="ChEBI" id="CHEBI:16708"/>
        <dbReference type="ChEBI" id="CHEBI:33019"/>
        <dbReference type="ChEBI" id="CHEBI:58017"/>
        <dbReference type="ChEBI" id="CHEBI:456215"/>
        <dbReference type="EC" id="2.4.2.7"/>
    </reaction>
</comment>
<comment type="pathway">
    <text evidence="1">Purine metabolism; AMP biosynthesis via salvage pathway; AMP from adenine: step 1/1.</text>
</comment>
<comment type="subunit">
    <text evidence="1">Homodimer.</text>
</comment>
<comment type="subcellular location">
    <subcellularLocation>
        <location evidence="1">Cytoplasm</location>
    </subcellularLocation>
</comment>
<comment type="similarity">
    <text evidence="1">Belongs to the purine/pyrimidine phosphoribosyltransferase family.</text>
</comment>
<name>APT_ERYLH</name>
<gene>
    <name evidence="1" type="primary">apt</name>
    <name type="ordered locus">ELI_13650</name>
</gene>
<dbReference type="EC" id="2.4.2.7" evidence="1"/>
<dbReference type="EMBL" id="CP000157">
    <property type="protein sequence ID" value="ABC64822.1"/>
    <property type="molecule type" value="Genomic_DNA"/>
</dbReference>
<dbReference type="RefSeq" id="WP_011415644.1">
    <property type="nucleotide sequence ID" value="NC_007722.1"/>
</dbReference>
<dbReference type="SMR" id="Q2N669"/>
<dbReference type="STRING" id="314225.ELI_13650"/>
<dbReference type="KEGG" id="eli:ELI_13650"/>
<dbReference type="eggNOG" id="COG0503">
    <property type="taxonomic scope" value="Bacteria"/>
</dbReference>
<dbReference type="HOGENOM" id="CLU_063339_3_0_5"/>
<dbReference type="OrthoDB" id="9803963at2"/>
<dbReference type="UniPathway" id="UPA00588">
    <property type="reaction ID" value="UER00646"/>
</dbReference>
<dbReference type="Proteomes" id="UP000008808">
    <property type="component" value="Chromosome"/>
</dbReference>
<dbReference type="GO" id="GO:0005737">
    <property type="term" value="C:cytoplasm"/>
    <property type="evidence" value="ECO:0007669"/>
    <property type="project" value="UniProtKB-SubCell"/>
</dbReference>
<dbReference type="GO" id="GO:0002055">
    <property type="term" value="F:adenine binding"/>
    <property type="evidence" value="ECO:0007669"/>
    <property type="project" value="TreeGrafter"/>
</dbReference>
<dbReference type="GO" id="GO:0003999">
    <property type="term" value="F:adenine phosphoribosyltransferase activity"/>
    <property type="evidence" value="ECO:0007669"/>
    <property type="project" value="UniProtKB-UniRule"/>
</dbReference>
<dbReference type="GO" id="GO:0016208">
    <property type="term" value="F:AMP binding"/>
    <property type="evidence" value="ECO:0007669"/>
    <property type="project" value="TreeGrafter"/>
</dbReference>
<dbReference type="GO" id="GO:0006168">
    <property type="term" value="P:adenine salvage"/>
    <property type="evidence" value="ECO:0007669"/>
    <property type="project" value="InterPro"/>
</dbReference>
<dbReference type="GO" id="GO:0044209">
    <property type="term" value="P:AMP salvage"/>
    <property type="evidence" value="ECO:0007669"/>
    <property type="project" value="UniProtKB-UniRule"/>
</dbReference>
<dbReference type="GO" id="GO:0006166">
    <property type="term" value="P:purine ribonucleoside salvage"/>
    <property type="evidence" value="ECO:0007669"/>
    <property type="project" value="UniProtKB-KW"/>
</dbReference>
<dbReference type="CDD" id="cd06223">
    <property type="entry name" value="PRTases_typeI"/>
    <property type="match status" value="1"/>
</dbReference>
<dbReference type="FunFam" id="3.40.50.2020:FF:000004">
    <property type="entry name" value="Adenine phosphoribosyltransferase"/>
    <property type="match status" value="1"/>
</dbReference>
<dbReference type="Gene3D" id="3.40.50.2020">
    <property type="match status" value="1"/>
</dbReference>
<dbReference type="HAMAP" id="MF_00004">
    <property type="entry name" value="Aden_phosphoribosyltr"/>
    <property type="match status" value="1"/>
</dbReference>
<dbReference type="InterPro" id="IPR005764">
    <property type="entry name" value="Ade_phspho_trans"/>
</dbReference>
<dbReference type="InterPro" id="IPR000836">
    <property type="entry name" value="PRibTrfase_dom"/>
</dbReference>
<dbReference type="InterPro" id="IPR029057">
    <property type="entry name" value="PRTase-like"/>
</dbReference>
<dbReference type="InterPro" id="IPR050054">
    <property type="entry name" value="UPRTase/APRTase"/>
</dbReference>
<dbReference type="NCBIfam" id="TIGR01090">
    <property type="entry name" value="apt"/>
    <property type="match status" value="1"/>
</dbReference>
<dbReference type="NCBIfam" id="NF002634">
    <property type="entry name" value="PRK02304.1-3"/>
    <property type="match status" value="1"/>
</dbReference>
<dbReference type="NCBIfam" id="NF002636">
    <property type="entry name" value="PRK02304.1-5"/>
    <property type="match status" value="1"/>
</dbReference>
<dbReference type="PANTHER" id="PTHR32315">
    <property type="entry name" value="ADENINE PHOSPHORIBOSYLTRANSFERASE"/>
    <property type="match status" value="1"/>
</dbReference>
<dbReference type="PANTHER" id="PTHR32315:SF3">
    <property type="entry name" value="ADENINE PHOSPHORIBOSYLTRANSFERASE"/>
    <property type="match status" value="1"/>
</dbReference>
<dbReference type="Pfam" id="PF00156">
    <property type="entry name" value="Pribosyltran"/>
    <property type="match status" value="1"/>
</dbReference>
<dbReference type="SUPFAM" id="SSF53271">
    <property type="entry name" value="PRTase-like"/>
    <property type="match status" value="1"/>
</dbReference>
<dbReference type="PROSITE" id="PS00103">
    <property type="entry name" value="PUR_PYR_PR_TRANSFER"/>
    <property type="match status" value="1"/>
</dbReference>
<protein>
    <recommendedName>
        <fullName evidence="1">Adenine phosphoribosyltransferase</fullName>
        <shortName evidence="1">APRT</shortName>
        <ecNumber evidence="1">2.4.2.7</ecNumber>
    </recommendedName>
</protein>
<keyword id="KW-0963">Cytoplasm</keyword>
<keyword id="KW-0328">Glycosyltransferase</keyword>
<keyword id="KW-0660">Purine salvage</keyword>
<keyword id="KW-1185">Reference proteome</keyword>
<keyword id="KW-0808">Transferase</keyword>
<accession>Q2N669</accession>